<reference key="1">
    <citation type="journal article" date="1991" name="Mol. Microbiol.">
        <title>Evidence for a common molecular origin of the capsule gene loci in Gram-negative bacteria expressing group II capsular polysaccharides.</title>
        <authorList>
            <person name="Frosch M."/>
            <person name="Edwards U."/>
            <person name="Bousset K."/>
            <person name="Krausse B."/>
            <person name="Weisgerber C."/>
        </authorList>
    </citation>
    <scope>NUCLEOTIDE SEQUENCE [GENOMIC DNA]</scope>
    <source>
        <strain>B1940 / Serogroup B</strain>
    </source>
</reference>
<reference key="2">
    <citation type="journal article" date="2000" name="Science">
        <title>Complete genome sequence of Neisseria meningitidis serogroup B strain MC58.</title>
        <authorList>
            <person name="Tettelin H."/>
            <person name="Saunders N.J."/>
            <person name="Heidelberg J.F."/>
            <person name="Jeffries A.C."/>
            <person name="Nelson K.E."/>
            <person name="Eisen J.A."/>
            <person name="Ketchum K.A."/>
            <person name="Hood D.W."/>
            <person name="Peden J.F."/>
            <person name="Dodson R.J."/>
            <person name="Nelson W.C."/>
            <person name="Gwinn M.L."/>
            <person name="DeBoy R.T."/>
            <person name="Peterson J.D."/>
            <person name="Hickey E.K."/>
            <person name="Haft D.H."/>
            <person name="Salzberg S.L."/>
            <person name="White O."/>
            <person name="Fleischmann R.D."/>
            <person name="Dougherty B.A."/>
            <person name="Mason T.M."/>
            <person name="Ciecko A."/>
            <person name="Parksey D.S."/>
            <person name="Blair E."/>
            <person name="Cittone H."/>
            <person name="Clark E.B."/>
            <person name="Cotton M.D."/>
            <person name="Utterback T.R."/>
            <person name="Khouri H.M."/>
            <person name="Qin H."/>
            <person name="Vamathevan J.J."/>
            <person name="Gill J."/>
            <person name="Scarlato V."/>
            <person name="Masignani V."/>
            <person name="Pizza M."/>
            <person name="Grandi G."/>
            <person name="Sun L."/>
            <person name="Smith H.O."/>
            <person name="Fraser C.M."/>
            <person name="Moxon E.R."/>
            <person name="Rappuoli R."/>
            <person name="Venter J.C."/>
        </authorList>
    </citation>
    <scope>NUCLEOTIDE SEQUENCE [LARGE SCALE GENOMIC DNA]</scope>
    <source>
        <strain>ATCC BAA-335 / MC58</strain>
    </source>
</reference>
<keyword id="KW-0972">Capsule biogenesis/degradation</keyword>
<keyword id="KW-0997">Cell inner membrane</keyword>
<keyword id="KW-1003">Cell membrane</keyword>
<keyword id="KW-0472">Membrane</keyword>
<keyword id="KW-0625">Polysaccharide transport</keyword>
<keyword id="KW-1185">Reference proteome</keyword>
<keyword id="KW-0762">Sugar transport</keyword>
<keyword id="KW-0812">Transmembrane</keyword>
<keyword id="KW-1133">Transmembrane helix</keyword>
<keyword id="KW-0813">Transport</keyword>
<sequence length="265" mass="30196">MKALHKTSFWESLAIQRRVIGALLMREIITRYGRNNIGFLWLFVEPLLMTFVIVLMWKFLRADRYSTLNIVAFAITGYPMLMMWRNASKRAVGSISSNASLLYHRNVRVLDTILARMILEIAGATIAQIVIMAVLIAIGWIEMPADMFYMLMAWLLMAFFAIGLGLVICSIAFNFEPFGKIWGTLTFVMMPLSGAFFFVHNLPPKVQEYALMIPMVHGTEMFRAGYFGSDVITYENPWYIVLCNLVLLLFGLAMVSKFSKGVEPQ</sequence>
<dbReference type="EMBL" id="M57677">
    <property type="protein sequence ID" value="AAA25452.1"/>
    <property type="molecule type" value="Genomic_DNA"/>
</dbReference>
<dbReference type="EMBL" id="AE002098">
    <property type="protein sequence ID" value="AAF40540.1"/>
    <property type="molecule type" value="Genomic_DNA"/>
</dbReference>
<dbReference type="PIR" id="G81241">
    <property type="entry name" value="G81241"/>
</dbReference>
<dbReference type="PIR" id="S15222">
    <property type="entry name" value="S15222"/>
</dbReference>
<dbReference type="RefSeq" id="NP_273137.1">
    <property type="nucleotide sequence ID" value="NC_003112.2"/>
</dbReference>
<dbReference type="RefSeq" id="WP_002215286.1">
    <property type="nucleotide sequence ID" value="NC_003112.2"/>
</dbReference>
<dbReference type="SMR" id="P32015"/>
<dbReference type="STRING" id="122586.NMB0073"/>
<dbReference type="PaxDb" id="122586-NMB0073"/>
<dbReference type="KEGG" id="nme:NMB0073"/>
<dbReference type="PATRIC" id="fig|122586.8.peg.107"/>
<dbReference type="HOGENOM" id="CLU_060703_5_1_4"/>
<dbReference type="InParanoid" id="P32015"/>
<dbReference type="OrthoDB" id="9814458at2"/>
<dbReference type="Proteomes" id="UP000000425">
    <property type="component" value="Chromosome"/>
</dbReference>
<dbReference type="GO" id="GO:0043190">
    <property type="term" value="C:ATP-binding cassette (ABC) transporter complex"/>
    <property type="evidence" value="ECO:0007669"/>
    <property type="project" value="InterPro"/>
</dbReference>
<dbReference type="GO" id="GO:0140359">
    <property type="term" value="F:ABC-type transporter activity"/>
    <property type="evidence" value="ECO:0007669"/>
    <property type="project" value="InterPro"/>
</dbReference>
<dbReference type="GO" id="GO:0015920">
    <property type="term" value="P:lipopolysaccharide transport"/>
    <property type="evidence" value="ECO:0000318"/>
    <property type="project" value="GO_Central"/>
</dbReference>
<dbReference type="GO" id="GO:0015774">
    <property type="term" value="P:polysaccharide transport"/>
    <property type="evidence" value="ECO:0007669"/>
    <property type="project" value="UniProtKB-KW"/>
</dbReference>
<dbReference type="InterPro" id="IPR013525">
    <property type="entry name" value="ABC2_TM"/>
</dbReference>
<dbReference type="InterPro" id="IPR047817">
    <property type="entry name" value="ABC2_TM_bact-type"/>
</dbReference>
<dbReference type="InterPro" id="IPR000412">
    <property type="entry name" value="ABC_2_transport"/>
</dbReference>
<dbReference type="PANTHER" id="PTHR30413:SF10">
    <property type="entry name" value="CAPSULE POLYSACCHARIDE EXPORT INNER-MEMBRANE PROTEIN CTRC"/>
    <property type="match status" value="1"/>
</dbReference>
<dbReference type="PANTHER" id="PTHR30413">
    <property type="entry name" value="INNER MEMBRANE TRANSPORT PERMEASE"/>
    <property type="match status" value="1"/>
</dbReference>
<dbReference type="Pfam" id="PF01061">
    <property type="entry name" value="ABC2_membrane"/>
    <property type="match status" value="1"/>
</dbReference>
<dbReference type="PRINTS" id="PR00164">
    <property type="entry name" value="ABC2TRNSPORT"/>
</dbReference>
<dbReference type="PROSITE" id="PS51012">
    <property type="entry name" value="ABC_TM2"/>
    <property type="match status" value="1"/>
</dbReference>
<feature type="chain" id="PRO_0000182980" description="Capsule polysaccharide export inner-membrane protein CtrC">
    <location>
        <begin position="1"/>
        <end position="265"/>
    </location>
</feature>
<feature type="transmembrane region" description="Helical" evidence="1">
    <location>
        <begin position="37"/>
        <end position="57"/>
    </location>
</feature>
<feature type="transmembrane region" description="Helical" evidence="1">
    <location>
        <begin position="67"/>
        <end position="84"/>
    </location>
</feature>
<feature type="transmembrane region" description="Helical" evidence="1">
    <location>
        <begin position="121"/>
        <end position="141"/>
    </location>
</feature>
<feature type="transmembrane region" description="Helical" evidence="1">
    <location>
        <begin position="148"/>
        <end position="168"/>
    </location>
</feature>
<feature type="transmembrane region" description="Helical" evidence="1">
    <location>
        <begin position="178"/>
        <end position="198"/>
    </location>
</feature>
<feature type="transmembrane region" description="Helical" evidence="1">
    <location>
        <begin position="238"/>
        <end position="258"/>
    </location>
</feature>
<feature type="domain" description="ABC transmembrane type-2" evidence="2">
    <location>
        <begin position="37"/>
        <end position="258"/>
    </location>
</feature>
<feature type="sequence conflict" description="In Ref. 1; AAA25452." evidence="3" ref="1">
    <original>R</original>
    <variation>K</variation>
    <location>
        <position position="61"/>
    </location>
</feature>
<proteinExistence type="inferred from homology"/>
<comment type="function">
    <text>May form an ATP-driven capsule polysaccharide export apparatus, in association with the CtrB and CtrD proteins.</text>
</comment>
<comment type="subcellular location">
    <subcellularLocation>
        <location evidence="3">Cell inner membrane</location>
        <topology evidence="3">Multi-pass membrane protein</topology>
    </subcellularLocation>
</comment>
<comment type="similarity">
    <text evidence="3">Belongs to the ABC-2 integral membrane protein family.</text>
</comment>
<protein>
    <recommendedName>
        <fullName>Capsule polysaccharide export inner-membrane protein CtrC</fullName>
    </recommendedName>
</protein>
<accession>P32015</accession>
<name>CTRC_NEIMB</name>
<gene>
    <name type="primary">ctrC</name>
    <name type="ordered locus">NMB0073</name>
</gene>
<organism>
    <name type="scientific">Neisseria meningitidis serogroup B (strain ATCC BAA-335 / MC58)</name>
    <dbReference type="NCBI Taxonomy" id="122586"/>
    <lineage>
        <taxon>Bacteria</taxon>
        <taxon>Pseudomonadati</taxon>
        <taxon>Pseudomonadota</taxon>
        <taxon>Betaproteobacteria</taxon>
        <taxon>Neisseriales</taxon>
        <taxon>Neisseriaceae</taxon>
        <taxon>Neisseria</taxon>
    </lineage>
</organism>
<evidence type="ECO:0000255" key="1"/>
<evidence type="ECO:0000255" key="2">
    <source>
        <dbReference type="PROSITE-ProRule" id="PRU00442"/>
    </source>
</evidence>
<evidence type="ECO:0000305" key="3"/>